<protein>
    <recommendedName>
        <fullName evidence="1">Flap endonuclease 1</fullName>
        <shortName evidence="1">FEN-1</shortName>
        <ecNumber evidence="1">3.1.-.-</ecNumber>
    </recommendedName>
    <alternativeName>
        <fullName evidence="1">Flap structure-specific endonuclease 1</fullName>
    </alternativeName>
</protein>
<proteinExistence type="inferred from homology"/>
<sequence>MGVKGLNQLIKEHSPHAYKEFELKNLFGRKVAIDASMCLYQFLIAVRQSDGQQLTNDEGETTSHLSGIFYRTIRMVENNIKPVYVFDGKPPVLKGGELEKRLLKREEAQKQIDNLKDDASVSDMTKYQKRLVRVSRDQNDEAKKLLELMGIPYVNAPCEAEAQCAELARGGKVFAAASEDMDTLCYEPPQLLRHLTFAEARKMPIDQITYKEAIQGLDMTKEQFIDLCILLGCDYCETIKGVGPVTAYKLIKEHGSLDNIVKYLQENPDKTKYKVPENWPYNEARQLFMKPEVLPALEVELKWKEPDLDGLIEYMVKNKGFSEDRIRSGAEKLKKGLKAGIQGRLDGFFTVVPKYSNTSPLGKDDKKRKTNDKKGAAAKKTKRR</sequence>
<keyword id="KW-0227">DNA damage</keyword>
<keyword id="KW-0234">DNA repair</keyword>
<keyword id="KW-0235">DNA replication</keyword>
<keyword id="KW-0255">Endonuclease</keyword>
<keyword id="KW-0269">Exonuclease</keyword>
<keyword id="KW-0378">Hydrolase</keyword>
<keyword id="KW-0460">Magnesium</keyword>
<keyword id="KW-0479">Metal-binding</keyword>
<keyword id="KW-0496">Mitochondrion</keyword>
<keyword id="KW-0540">Nuclease</keyword>
<keyword id="KW-0539">Nucleus</keyword>
<keyword id="KW-0597">Phosphoprotein</keyword>
<keyword id="KW-1185">Reference proteome</keyword>
<gene>
    <name evidence="1" type="primary">FEN1</name>
    <name type="ORF">LELG_03308</name>
</gene>
<organism>
    <name type="scientific">Lodderomyces elongisporus (strain ATCC 11503 / CBS 2605 / JCM 1781 / NBRC 1676 / NRRL YB-4239)</name>
    <name type="common">Yeast</name>
    <name type="synonym">Saccharomyces elongisporus</name>
    <dbReference type="NCBI Taxonomy" id="379508"/>
    <lineage>
        <taxon>Eukaryota</taxon>
        <taxon>Fungi</taxon>
        <taxon>Dikarya</taxon>
        <taxon>Ascomycota</taxon>
        <taxon>Saccharomycotina</taxon>
        <taxon>Pichiomycetes</taxon>
        <taxon>Debaryomycetaceae</taxon>
        <taxon>Candida/Lodderomyces clade</taxon>
        <taxon>Lodderomyces</taxon>
    </lineage>
</organism>
<feature type="chain" id="PRO_0000403583" description="Flap endonuclease 1">
    <location>
        <begin position="1"/>
        <end position="384"/>
    </location>
</feature>
<feature type="region of interest" description="N-domain">
    <location>
        <begin position="1"/>
        <end position="105"/>
    </location>
</feature>
<feature type="region of interest" description="I-domain">
    <location>
        <begin position="123"/>
        <end position="254"/>
    </location>
</feature>
<feature type="region of interest" description="Interaction with PCNA" evidence="1">
    <location>
        <begin position="341"/>
        <end position="349"/>
    </location>
</feature>
<feature type="region of interest" description="Disordered" evidence="2">
    <location>
        <begin position="354"/>
        <end position="384"/>
    </location>
</feature>
<feature type="compositionally biased region" description="Basic and acidic residues" evidence="2">
    <location>
        <begin position="362"/>
        <end position="375"/>
    </location>
</feature>
<feature type="binding site" evidence="1">
    <location>
        <position position="34"/>
    </location>
    <ligand>
        <name>Mg(2+)</name>
        <dbReference type="ChEBI" id="CHEBI:18420"/>
        <label>1</label>
    </ligand>
</feature>
<feature type="binding site" evidence="1">
    <location>
        <position position="47"/>
    </location>
    <ligand>
        <name>DNA</name>
        <dbReference type="ChEBI" id="CHEBI:16991"/>
    </ligand>
</feature>
<feature type="binding site" evidence="1">
    <location>
        <position position="71"/>
    </location>
    <ligand>
        <name>DNA</name>
        <dbReference type="ChEBI" id="CHEBI:16991"/>
    </ligand>
</feature>
<feature type="binding site" evidence="1">
    <location>
        <position position="87"/>
    </location>
    <ligand>
        <name>Mg(2+)</name>
        <dbReference type="ChEBI" id="CHEBI:18420"/>
        <label>1</label>
    </ligand>
</feature>
<feature type="binding site" evidence="1">
    <location>
        <position position="159"/>
    </location>
    <ligand>
        <name>DNA</name>
        <dbReference type="ChEBI" id="CHEBI:16991"/>
    </ligand>
</feature>
<feature type="binding site" evidence="1">
    <location>
        <position position="159"/>
    </location>
    <ligand>
        <name>Mg(2+)</name>
        <dbReference type="ChEBI" id="CHEBI:18420"/>
        <label>1</label>
    </ligand>
</feature>
<feature type="binding site" evidence="1">
    <location>
        <position position="161"/>
    </location>
    <ligand>
        <name>Mg(2+)</name>
        <dbReference type="ChEBI" id="CHEBI:18420"/>
        <label>1</label>
    </ligand>
</feature>
<feature type="binding site" evidence="1">
    <location>
        <position position="180"/>
    </location>
    <ligand>
        <name>Mg(2+)</name>
        <dbReference type="ChEBI" id="CHEBI:18420"/>
        <label>2</label>
    </ligand>
</feature>
<feature type="binding site" evidence="1">
    <location>
        <position position="182"/>
    </location>
    <ligand>
        <name>Mg(2+)</name>
        <dbReference type="ChEBI" id="CHEBI:18420"/>
        <label>2</label>
    </ligand>
</feature>
<feature type="binding site" evidence="1">
    <location>
        <position position="232"/>
    </location>
    <ligand>
        <name>DNA</name>
        <dbReference type="ChEBI" id="CHEBI:16991"/>
    </ligand>
</feature>
<feature type="binding site" evidence="1">
    <location>
        <position position="234"/>
    </location>
    <ligand>
        <name>DNA</name>
        <dbReference type="ChEBI" id="CHEBI:16991"/>
    </ligand>
</feature>
<feature type="binding site" evidence="1">
    <location>
        <position position="234"/>
    </location>
    <ligand>
        <name>Mg(2+)</name>
        <dbReference type="ChEBI" id="CHEBI:18420"/>
        <label>2</label>
    </ligand>
</feature>
<accession>A5E121</accession>
<dbReference type="EC" id="3.1.-.-" evidence="1"/>
<dbReference type="EMBL" id="CH981527">
    <property type="protein sequence ID" value="EDK45129.1"/>
    <property type="molecule type" value="Genomic_DNA"/>
</dbReference>
<dbReference type="RefSeq" id="XP_001525380.1">
    <property type="nucleotide sequence ID" value="XM_001525330.1"/>
</dbReference>
<dbReference type="SMR" id="A5E121"/>
<dbReference type="FunCoup" id="A5E121">
    <property type="interactions" value="1028"/>
</dbReference>
<dbReference type="STRING" id="379508.A5E121"/>
<dbReference type="GeneID" id="5232249"/>
<dbReference type="KEGG" id="lel:PVL30_002806"/>
<dbReference type="VEuPathDB" id="FungiDB:LELG_03308"/>
<dbReference type="eggNOG" id="KOG2519">
    <property type="taxonomic scope" value="Eukaryota"/>
</dbReference>
<dbReference type="HOGENOM" id="CLU_032444_2_0_1"/>
<dbReference type="InParanoid" id="A5E121"/>
<dbReference type="OMA" id="IQEVHID"/>
<dbReference type="OrthoDB" id="1937206at2759"/>
<dbReference type="Proteomes" id="UP000001996">
    <property type="component" value="Unassembled WGS sequence"/>
</dbReference>
<dbReference type="GO" id="GO:0005739">
    <property type="term" value="C:mitochondrion"/>
    <property type="evidence" value="ECO:0007669"/>
    <property type="project" value="UniProtKB-SubCell"/>
</dbReference>
<dbReference type="GO" id="GO:0005730">
    <property type="term" value="C:nucleolus"/>
    <property type="evidence" value="ECO:0007669"/>
    <property type="project" value="UniProtKB-SubCell"/>
</dbReference>
<dbReference type="GO" id="GO:0005654">
    <property type="term" value="C:nucleoplasm"/>
    <property type="evidence" value="ECO:0007669"/>
    <property type="project" value="UniProtKB-SubCell"/>
</dbReference>
<dbReference type="GO" id="GO:0008409">
    <property type="term" value="F:5'-3' exonuclease activity"/>
    <property type="evidence" value="ECO:0007669"/>
    <property type="project" value="UniProtKB-UniRule"/>
</dbReference>
<dbReference type="GO" id="GO:0017108">
    <property type="term" value="F:5'-flap endonuclease activity"/>
    <property type="evidence" value="ECO:0007669"/>
    <property type="project" value="UniProtKB-UniRule"/>
</dbReference>
<dbReference type="GO" id="GO:0003677">
    <property type="term" value="F:DNA binding"/>
    <property type="evidence" value="ECO:0007669"/>
    <property type="project" value="UniProtKB-UniRule"/>
</dbReference>
<dbReference type="GO" id="GO:0000287">
    <property type="term" value="F:magnesium ion binding"/>
    <property type="evidence" value="ECO:0007669"/>
    <property type="project" value="UniProtKB-UniRule"/>
</dbReference>
<dbReference type="GO" id="GO:0006284">
    <property type="term" value="P:base-excision repair"/>
    <property type="evidence" value="ECO:0007669"/>
    <property type="project" value="UniProtKB-UniRule"/>
</dbReference>
<dbReference type="GO" id="GO:0043137">
    <property type="term" value="P:DNA replication, removal of RNA primer"/>
    <property type="evidence" value="ECO:0007669"/>
    <property type="project" value="UniProtKB-UniRule"/>
</dbReference>
<dbReference type="CDD" id="cd09907">
    <property type="entry name" value="H3TH_FEN1-Euk"/>
    <property type="match status" value="1"/>
</dbReference>
<dbReference type="CDD" id="cd09867">
    <property type="entry name" value="PIN_FEN1"/>
    <property type="match status" value="1"/>
</dbReference>
<dbReference type="FunFam" id="1.10.150.20:FF:000009">
    <property type="entry name" value="Flap endonuclease 1"/>
    <property type="match status" value="1"/>
</dbReference>
<dbReference type="FunFam" id="3.40.50.1010:FF:000003">
    <property type="entry name" value="Flap endonuclease 1"/>
    <property type="match status" value="1"/>
</dbReference>
<dbReference type="Gene3D" id="1.10.150.20">
    <property type="entry name" value="5' to 3' exonuclease, C-terminal subdomain"/>
    <property type="match status" value="1"/>
</dbReference>
<dbReference type="Gene3D" id="3.40.50.1010">
    <property type="entry name" value="5'-nuclease"/>
    <property type="match status" value="1"/>
</dbReference>
<dbReference type="HAMAP" id="MF_00614">
    <property type="entry name" value="Fen"/>
    <property type="match status" value="1"/>
</dbReference>
<dbReference type="InterPro" id="IPR036279">
    <property type="entry name" value="5-3_exonuclease_C_sf"/>
</dbReference>
<dbReference type="InterPro" id="IPR023426">
    <property type="entry name" value="Flap_endonuc"/>
</dbReference>
<dbReference type="InterPro" id="IPR008918">
    <property type="entry name" value="HhH2"/>
</dbReference>
<dbReference type="InterPro" id="IPR029060">
    <property type="entry name" value="PIN-like_dom_sf"/>
</dbReference>
<dbReference type="InterPro" id="IPR006086">
    <property type="entry name" value="XPG-I_dom"/>
</dbReference>
<dbReference type="InterPro" id="IPR006084">
    <property type="entry name" value="XPG/Rad2"/>
</dbReference>
<dbReference type="InterPro" id="IPR019974">
    <property type="entry name" value="XPG_CS"/>
</dbReference>
<dbReference type="InterPro" id="IPR006085">
    <property type="entry name" value="XPG_DNA_repair_N"/>
</dbReference>
<dbReference type="PANTHER" id="PTHR11081:SF9">
    <property type="entry name" value="FLAP ENDONUCLEASE 1"/>
    <property type="match status" value="1"/>
</dbReference>
<dbReference type="PANTHER" id="PTHR11081">
    <property type="entry name" value="FLAP ENDONUCLEASE FAMILY MEMBER"/>
    <property type="match status" value="1"/>
</dbReference>
<dbReference type="Pfam" id="PF00867">
    <property type="entry name" value="XPG_I"/>
    <property type="match status" value="1"/>
</dbReference>
<dbReference type="Pfam" id="PF00752">
    <property type="entry name" value="XPG_N"/>
    <property type="match status" value="1"/>
</dbReference>
<dbReference type="PRINTS" id="PR00853">
    <property type="entry name" value="XPGRADSUPER"/>
</dbReference>
<dbReference type="SMART" id="SM00279">
    <property type="entry name" value="HhH2"/>
    <property type="match status" value="1"/>
</dbReference>
<dbReference type="SMART" id="SM00484">
    <property type="entry name" value="XPGI"/>
    <property type="match status" value="1"/>
</dbReference>
<dbReference type="SMART" id="SM00485">
    <property type="entry name" value="XPGN"/>
    <property type="match status" value="1"/>
</dbReference>
<dbReference type="SUPFAM" id="SSF47807">
    <property type="entry name" value="5' to 3' exonuclease, C-terminal subdomain"/>
    <property type="match status" value="1"/>
</dbReference>
<dbReference type="SUPFAM" id="SSF88723">
    <property type="entry name" value="PIN domain-like"/>
    <property type="match status" value="1"/>
</dbReference>
<dbReference type="PROSITE" id="PS00841">
    <property type="entry name" value="XPG_1"/>
    <property type="match status" value="1"/>
</dbReference>
<dbReference type="PROSITE" id="PS00842">
    <property type="entry name" value="XPG_2"/>
    <property type="match status" value="1"/>
</dbReference>
<name>FEN1_LODEL</name>
<evidence type="ECO:0000255" key="1">
    <source>
        <dbReference type="HAMAP-Rule" id="MF_03140"/>
    </source>
</evidence>
<evidence type="ECO:0000256" key="2">
    <source>
        <dbReference type="SAM" id="MobiDB-lite"/>
    </source>
</evidence>
<comment type="function">
    <text evidence="1">Structure-specific nuclease with 5'-flap endonuclease and 5'-3' exonuclease activities involved in DNA replication and repair. During DNA replication, cleaves the 5'-overhanging flap structure that is generated by displacement synthesis when DNA polymerase encounters the 5'-end of a downstream Okazaki fragment. It enters the flap from the 5'-end and then tracks to cleave the flap base, leaving a nick for ligation. Also involved in the long patch base excision repair (LP-BER) pathway, by cleaving within the apurinic/apyrimidinic (AP) site-terminated flap. Acts as a genome stabilization factor that prevents flaps from equilibrating into structures that lead to duplications and deletions. Also possesses 5'-3' exonuclease activity on nicked or gapped double-stranded DNA, and exhibits RNase H activity. Also involved in replication and repair of rDNA and in repairing mitochondrial DNA.</text>
</comment>
<comment type="cofactor">
    <cofactor evidence="1">
        <name>Mg(2+)</name>
        <dbReference type="ChEBI" id="CHEBI:18420"/>
    </cofactor>
    <text evidence="1">Binds 2 magnesium ions per subunit. They probably participate in the reaction catalyzed by the enzyme. May bind an additional third magnesium ion after substrate binding.</text>
</comment>
<comment type="subunit">
    <text evidence="1">Interacts with PCNA. Three molecules of FEN1 bind to one PCNA trimer with each molecule binding to one PCNA monomer. PCNA stimulates the nuclease activity without altering cleavage specificity.</text>
</comment>
<comment type="subcellular location">
    <subcellularLocation>
        <location evidence="1">Nucleus</location>
        <location evidence="1">Nucleolus</location>
    </subcellularLocation>
    <subcellularLocation>
        <location evidence="1">Nucleus</location>
        <location evidence="1">Nucleoplasm</location>
    </subcellularLocation>
    <subcellularLocation>
        <location evidence="1">Mitochondrion</location>
    </subcellularLocation>
    <text evidence="1">Resides mostly in the nucleoli and relocalizes to the nucleoplasm upon DNA damage.</text>
</comment>
<comment type="PTM">
    <text evidence="1">Phosphorylated. Phosphorylation upon DNA damage induces relocalization to the nuclear plasma.</text>
</comment>
<comment type="similarity">
    <text evidence="1">Belongs to the XPG/RAD2 endonuclease family. FEN1 subfamily.</text>
</comment>
<reference key="1">
    <citation type="journal article" date="2009" name="Nature">
        <title>Evolution of pathogenicity and sexual reproduction in eight Candida genomes.</title>
        <authorList>
            <person name="Butler G."/>
            <person name="Rasmussen M.D."/>
            <person name="Lin M.F."/>
            <person name="Santos M.A.S."/>
            <person name="Sakthikumar S."/>
            <person name="Munro C.A."/>
            <person name="Rheinbay E."/>
            <person name="Grabherr M."/>
            <person name="Forche A."/>
            <person name="Reedy J.L."/>
            <person name="Agrafioti I."/>
            <person name="Arnaud M.B."/>
            <person name="Bates S."/>
            <person name="Brown A.J.P."/>
            <person name="Brunke S."/>
            <person name="Costanzo M.C."/>
            <person name="Fitzpatrick D.A."/>
            <person name="de Groot P.W.J."/>
            <person name="Harris D."/>
            <person name="Hoyer L.L."/>
            <person name="Hube B."/>
            <person name="Klis F.M."/>
            <person name="Kodira C."/>
            <person name="Lennard N."/>
            <person name="Logue M.E."/>
            <person name="Martin R."/>
            <person name="Neiman A.M."/>
            <person name="Nikolaou E."/>
            <person name="Quail M.A."/>
            <person name="Quinn J."/>
            <person name="Santos M.C."/>
            <person name="Schmitzberger F.F."/>
            <person name="Sherlock G."/>
            <person name="Shah P."/>
            <person name="Silverstein K.A.T."/>
            <person name="Skrzypek M.S."/>
            <person name="Soll D."/>
            <person name="Staggs R."/>
            <person name="Stansfield I."/>
            <person name="Stumpf M.P.H."/>
            <person name="Sudbery P.E."/>
            <person name="Srikantha T."/>
            <person name="Zeng Q."/>
            <person name="Berman J."/>
            <person name="Berriman M."/>
            <person name="Heitman J."/>
            <person name="Gow N.A.R."/>
            <person name="Lorenz M.C."/>
            <person name="Birren B.W."/>
            <person name="Kellis M."/>
            <person name="Cuomo C.A."/>
        </authorList>
    </citation>
    <scope>NUCLEOTIDE SEQUENCE [LARGE SCALE GENOMIC DNA]</scope>
    <source>
        <strain>ATCC 11503 / BCRC 21390 / CBS 2605 / JCM 1781 / NBRC 1676 / NRRL YB-4239</strain>
    </source>
</reference>